<evidence type="ECO:0000255" key="1">
    <source>
        <dbReference type="HAMAP-Rule" id="MF_00015"/>
    </source>
</evidence>
<gene>
    <name evidence="1" type="primary">lexA</name>
    <name type="ordered locus">HD_0545</name>
</gene>
<feature type="chain" id="PRO_0000170041" description="LexA repressor">
    <location>
        <begin position="1"/>
        <end position="211"/>
    </location>
</feature>
<feature type="DNA-binding region" description="H-T-H motif" evidence="1">
    <location>
        <begin position="30"/>
        <end position="50"/>
    </location>
</feature>
<feature type="active site" description="For autocatalytic cleavage activity" evidence="1">
    <location>
        <position position="128"/>
    </location>
</feature>
<feature type="active site" description="For autocatalytic cleavage activity" evidence="1">
    <location>
        <position position="165"/>
    </location>
</feature>
<feature type="site" description="Cleavage; by autolysis" evidence="1">
    <location>
        <begin position="93"/>
        <end position="94"/>
    </location>
</feature>
<sequence length="211" mass="23623">MSRKHLTARQQEIFDFLKHHIDTTGMPPTRVEIAREIGFKSPNAAEEHLKALARKGYIEMLSGTSRGIRILINNDNEDVTQDLSLPLIGKVAAGTPIMAIEHVESHYPVNGAMFNPNADYLLKVNGNSMEKIGILDGDLLAVHKTNFARNGQVVVARVEDEVTVKRLEKKGELIYLHPENDELQPIIVDPRLKYIEIEGIAVGVIRNNAWM</sequence>
<organism>
    <name type="scientific">Haemophilus ducreyi (strain 35000HP / ATCC 700724)</name>
    <dbReference type="NCBI Taxonomy" id="233412"/>
    <lineage>
        <taxon>Bacteria</taxon>
        <taxon>Pseudomonadati</taxon>
        <taxon>Pseudomonadota</taxon>
        <taxon>Gammaproteobacteria</taxon>
        <taxon>Pasteurellales</taxon>
        <taxon>Pasteurellaceae</taxon>
        <taxon>Haemophilus</taxon>
    </lineage>
</organism>
<keyword id="KW-0068">Autocatalytic cleavage</keyword>
<keyword id="KW-0227">DNA damage</keyword>
<keyword id="KW-0234">DNA repair</keyword>
<keyword id="KW-0235">DNA replication</keyword>
<keyword id="KW-0238">DNA-binding</keyword>
<keyword id="KW-0378">Hydrolase</keyword>
<keyword id="KW-1185">Reference proteome</keyword>
<keyword id="KW-0678">Repressor</keyword>
<keyword id="KW-0742">SOS response</keyword>
<keyword id="KW-0804">Transcription</keyword>
<keyword id="KW-0805">Transcription regulation</keyword>
<comment type="function">
    <text evidence="1">Represses a number of genes involved in the response to DNA damage (SOS response), including recA and lexA. In the presence of single-stranded DNA, RecA interacts with LexA causing an autocatalytic cleavage which disrupts the DNA-binding part of LexA, leading to derepression of the SOS regulon and eventually DNA repair.</text>
</comment>
<comment type="catalytic activity">
    <reaction evidence="1">
        <text>Hydrolysis of Ala-|-Gly bond in repressor LexA.</text>
        <dbReference type="EC" id="3.4.21.88"/>
    </reaction>
</comment>
<comment type="subunit">
    <text evidence="1">Homodimer.</text>
</comment>
<comment type="similarity">
    <text evidence="1">Belongs to the peptidase S24 family.</text>
</comment>
<proteinExistence type="inferred from homology"/>
<reference key="1">
    <citation type="submission" date="2003-06" db="EMBL/GenBank/DDBJ databases">
        <title>The complete genome sequence of Haemophilus ducreyi.</title>
        <authorList>
            <person name="Munson R.S. Jr."/>
            <person name="Ray W.C."/>
            <person name="Mahairas G."/>
            <person name="Sabo P."/>
            <person name="Mungur R."/>
            <person name="Johnson L."/>
            <person name="Nguyen D."/>
            <person name="Wang J."/>
            <person name="Forst C."/>
            <person name="Hood L."/>
        </authorList>
    </citation>
    <scope>NUCLEOTIDE SEQUENCE [LARGE SCALE GENOMIC DNA]</scope>
    <source>
        <strain>35000HP / ATCC 700724</strain>
    </source>
</reference>
<name>LEXA_HAEDU</name>
<accession>Q7VNI6</accession>
<protein>
    <recommendedName>
        <fullName evidence="1">LexA repressor</fullName>
        <ecNumber evidence="1">3.4.21.88</ecNumber>
    </recommendedName>
</protein>
<dbReference type="EC" id="3.4.21.88" evidence="1"/>
<dbReference type="EMBL" id="AE017143">
    <property type="protein sequence ID" value="AAP95484.1"/>
    <property type="molecule type" value="Genomic_DNA"/>
</dbReference>
<dbReference type="RefSeq" id="WP_010944537.1">
    <property type="nucleotide sequence ID" value="NC_002940.2"/>
</dbReference>
<dbReference type="SMR" id="Q7VNI6"/>
<dbReference type="STRING" id="233412.HD_0545"/>
<dbReference type="MEROPS" id="S24.001"/>
<dbReference type="KEGG" id="hdu:HD_0545"/>
<dbReference type="eggNOG" id="COG1974">
    <property type="taxonomic scope" value="Bacteria"/>
</dbReference>
<dbReference type="HOGENOM" id="CLU_066192_45_3_6"/>
<dbReference type="OrthoDB" id="9802364at2"/>
<dbReference type="Proteomes" id="UP000001022">
    <property type="component" value="Chromosome"/>
</dbReference>
<dbReference type="GO" id="GO:0003677">
    <property type="term" value="F:DNA binding"/>
    <property type="evidence" value="ECO:0007669"/>
    <property type="project" value="UniProtKB-UniRule"/>
</dbReference>
<dbReference type="GO" id="GO:0004252">
    <property type="term" value="F:serine-type endopeptidase activity"/>
    <property type="evidence" value="ECO:0007669"/>
    <property type="project" value="UniProtKB-UniRule"/>
</dbReference>
<dbReference type="GO" id="GO:0006281">
    <property type="term" value="P:DNA repair"/>
    <property type="evidence" value="ECO:0007669"/>
    <property type="project" value="UniProtKB-UniRule"/>
</dbReference>
<dbReference type="GO" id="GO:0006260">
    <property type="term" value="P:DNA replication"/>
    <property type="evidence" value="ECO:0007669"/>
    <property type="project" value="UniProtKB-UniRule"/>
</dbReference>
<dbReference type="GO" id="GO:0045892">
    <property type="term" value="P:negative regulation of DNA-templated transcription"/>
    <property type="evidence" value="ECO:0007669"/>
    <property type="project" value="UniProtKB-UniRule"/>
</dbReference>
<dbReference type="GO" id="GO:0006508">
    <property type="term" value="P:proteolysis"/>
    <property type="evidence" value="ECO:0007669"/>
    <property type="project" value="InterPro"/>
</dbReference>
<dbReference type="GO" id="GO:0009432">
    <property type="term" value="P:SOS response"/>
    <property type="evidence" value="ECO:0007669"/>
    <property type="project" value="UniProtKB-UniRule"/>
</dbReference>
<dbReference type="CDD" id="cd06529">
    <property type="entry name" value="S24_LexA-like"/>
    <property type="match status" value="1"/>
</dbReference>
<dbReference type="FunFam" id="1.10.10.10:FF:000009">
    <property type="entry name" value="LexA repressor"/>
    <property type="match status" value="1"/>
</dbReference>
<dbReference type="FunFam" id="2.10.109.10:FF:000001">
    <property type="entry name" value="LexA repressor"/>
    <property type="match status" value="1"/>
</dbReference>
<dbReference type="Gene3D" id="2.10.109.10">
    <property type="entry name" value="Umud Fragment, subunit A"/>
    <property type="match status" value="1"/>
</dbReference>
<dbReference type="Gene3D" id="1.10.10.10">
    <property type="entry name" value="Winged helix-like DNA-binding domain superfamily/Winged helix DNA-binding domain"/>
    <property type="match status" value="1"/>
</dbReference>
<dbReference type="HAMAP" id="MF_00015">
    <property type="entry name" value="LexA"/>
    <property type="match status" value="1"/>
</dbReference>
<dbReference type="InterPro" id="IPR006200">
    <property type="entry name" value="LexA"/>
</dbReference>
<dbReference type="InterPro" id="IPR039418">
    <property type="entry name" value="LexA-like"/>
</dbReference>
<dbReference type="InterPro" id="IPR036286">
    <property type="entry name" value="LexA/Signal_pep-like_sf"/>
</dbReference>
<dbReference type="InterPro" id="IPR006199">
    <property type="entry name" value="LexA_DNA-bd_dom"/>
</dbReference>
<dbReference type="InterPro" id="IPR050077">
    <property type="entry name" value="LexA_repressor"/>
</dbReference>
<dbReference type="InterPro" id="IPR006197">
    <property type="entry name" value="Peptidase_S24_LexA"/>
</dbReference>
<dbReference type="InterPro" id="IPR015927">
    <property type="entry name" value="Peptidase_S24_S26A/B/C"/>
</dbReference>
<dbReference type="InterPro" id="IPR036388">
    <property type="entry name" value="WH-like_DNA-bd_sf"/>
</dbReference>
<dbReference type="InterPro" id="IPR036390">
    <property type="entry name" value="WH_DNA-bd_sf"/>
</dbReference>
<dbReference type="NCBIfam" id="TIGR00498">
    <property type="entry name" value="lexA"/>
    <property type="match status" value="1"/>
</dbReference>
<dbReference type="PANTHER" id="PTHR33516">
    <property type="entry name" value="LEXA REPRESSOR"/>
    <property type="match status" value="1"/>
</dbReference>
<dbReference type="PANTHER" id="PTHR33516:SF2">
    <property type="entry name" value="LEXA REPRESSOR-RELATED"/>
    <property type="match status" value="1"/>
</dbReference>
<dbReference type="Pfam" id="PF01726">
    <property type="entry name" value="LexA_DNA_bind"/>
    <property type="match status" value="1"/>
</dbReference>
<dbReference type="Pfam" id="PF00717">
    <property type="entry name" value="Peptidase_S24"/>
    <property type="match status" value="1"/>
</dbReference>
<dbReference type="PRINTS" id="PR00726">
    <property type="entry name" value="LEXASERPTASE"/>
</dbReference>
<dbReference type="SUPFAM" id="SSF51306">
    <property type="entry name" value="LexA/Signal peptidase"/>
    <property type="match status" value="1"/>
</dbReference>
<dbReference type="SUPFAM" id="SSF46785">
    <property type="entry name" value="Winged helix' DNA-binding domain"/>
    <property type="match status" value="1"/>
</dbReference>